<sequence length="450" mass="49737">MRATAAKKVFIKTYGCQMNVYDSQRMGDALAADGYTATDAIDEADLVLLNTCHIREKAAEKVYSELGRIRDMKAERAIAGRELLIGVAGCVAQAEGAEIIRRSPAVDLVIGPQTYHRLPDVLARVRGGEKIVETDYAIEDKFDHLPQPKRAEVIKRGVTAFLTVQEGCDKFCTFCVVPYTRGSEVSRPVAQIVAEAERLAEAGVREVTLLGQNVNAWHGQGENGEEWGLGRLLFRLAEIPGLARLRYTTSHPRDMDDELISAHRDLPSLMPYLHLPVQSGSDRILKAMNRRHTARDYLALLDRIRAARPDIALSGDFIVGFPGETEADFEATMELVRQVNYASAFSFKYSPRPGTPGAEMPDHVPETLKDERLQRLQALLLKQQQGFGSSLVGSTIDTLIEKPGRQAGQKVGRTPWLQPVIVDEKAGEIGDIIQVRITKTGYNSLFAELA</sequence>
<keyword id="KW-0004">4Fe-4S</keyword>
<keyword id="KW-0963">Cytoplasm</keyword>
<keyword id="KW-0408">Iron</keyword>
<keyword id="KW-0411">Iron-sulfur</keyword>
<keyword id="KW-0479">Metal-binding</keyword>
<keyword id="KW-0949">S-adenosyl-L-methionine</keyword>
<keyword id="KW-0808">Transferase</keyword>
<keyword id="KW-0819">tRNA processing</keyword>
<dbReference type="EC" id="2.8.4.3" evidence="1"/>
<dbReference type="EMBL" id="BA000012">
    <property type="protein sequence ID" value="BAB51969.1"/>
    <property type="molecule type" value="Genomic_DNA"/>
</dbReference>
<dbReference type="SMR" id="Q98BK3"/>
<dbReference type="KEGG" id="mlo:mlr5534"/>
<dbReference type="eggNOG" id="COG0621">
    <property type="taxonomic scope" value="Bacteria"/>
</dbReference>
<dbReference type="HOGENOM" id="CLU_018697_2_0_5"/>
<dbReference type="Proteomes" id="UP000000552">
    <property type="component" value="Chromosome"/>
</dbReference>
<dbReference type="GO" id="GO:0005829">
    <property type="term" value="C:cytosol"/>
    <property type="evidence" value="ECO:0007669"/>
    <property type="project" value="TreeGrafter"/>
</dbReference>
<dbReference type="GO" id="GO:0051539">
    <property type="term" value="F:4 iron, 4 sulfur cluster binding"/>
    <property type="evidence" value="ECO:0007669"/>
    <property type="project" value="UniProtKB-UniRule"/>
</dbReference>
<dbReference type="GO" id="GO:0046872">
    <property type="term" value="F:metal ion binding"/>
    <property type="evidence" value="ECO:0007669"/>
    <property type="project" value="UniProtKB-KW"/>
</dbReference>
<dbReference type="GO" id="GO:0035597">
    <property type="term" value="F:N6-isopentenyladenosine methylthiotransferase activity"/>
    <property type="evidence" value="ECO:0007669"/>
    <property type="project" value="TreeGrafter"/>
</dbReference>
<dbReference type="CDD" id="cd01335">
    <property type="entry name" value="Radical_SAM"/>
    <property type="match status" value="1"/>
</dbReference>
<dbReference type="FunFam" id="3.40.50.12160:FF:000001">
    <property type="entry name" value="tRNA-2-methylthio-N(6)-dimethylallyladenosine synthase"/>
    <property type="match status" value="1"/>
</dbReference>
<dbReference type="FunFam" id="3.80.30.20:FF:000001">
    <property type="entry name" value="tRNA-2-methylthio-N(6)-dimethylallyladenosine synthase 2"/>
    <property type="match status" value="1"/>
</dbReference>
<dbReference type="Gene3D" id="3.40.50.12160">
    <property type="entry name" value="Methylthiotransferase, N-terminal domain"/>
    <property type="match status" value="1"/>
</dbReference>
<dbReference type="Gene3D" id="3.80.30.20">
    <property type="entry name" value="tm_1862 like domain"/>
    <property type="match status" value="1"/>
</dbReference>
<dbReference type="HAMAP" id="MF_01864">
    <property type="entry name" value="tRNA_metthiotr_MiaB"/>
    <property type="match status" value="1"/>
</dbReference>
<dbReference type="InterPro" id="IPR006638">
    <property type="entry name" value="Elp3/MiaA/NifB-like_rSAM"/>
</dbReference>
<dbReference type="InterPro" id="IPR005839">
    <property type="entry name" value="Methylthiotransferase"/>
</dbReference>
<dbReference type="InterPro" id="IPR020612">
    <property type="entry name" value="Methylthiotransferase_CS"/>
</dbReference>
<dbReference type="InterPro" id="IPR013848">
    <property type="entry name" value="Methylthiotransferase_N"/>
</dbReference>
<dbReference type="InterPro" id="IPR038135">
    <property type="entry name" value="Methylthiotransferase_N_sf"/>
</dbReference>
<dbReference type="InterPro" id="IPR006463">
    <property type="entry name" value="MiaB_methiolase"/>
</dbReference>
<dbReference type="InterPro" id="IPR007197">
    <property type="entry name" value="rSAM"/>
</dbReference>
<dbReference type="InterPro" id="IPR023404">
    <property type="entry name" value="rSAM_horseshoe"/>
</dbReference>
<dbReference type="InterPro" id="IPR002792">
    <property type="entry name" value="TRAM_dom"/>
</dbReference>
<dbReference type="NCBIfam" id="TIGR01574">
    <property type="entry name" value="miaB-methiolase"/>
    <property type="match status" value="1"/>
</dbReference>
<dbReference type="NCBIfam" id="TIGR00089">
    <property type="entry name" value="MiaB/RimO family radical SAM methylthiotransferase"/>
    <property type="match status" value="1"/>
</dbReference>
<dbReference type="PANTHER" id="PTHR43020">
    <property type="entry name" value="CDK5 REGULATORY SUBUNIT-ASSOCIATED PROTEIN 1"/>
    <property type="match status" value="1"/>
</dbReference>
<dbReference type="PANTHER" id="PTHR43020:SF2">
    <property type="entry name" value="MITOCHONDRIAL TRNA METHYLTHIOTRANSFERASE CDK5RAP1"/>
    <property type="match status" value="1"/>
</dbReference>
<dbReference type="Pfam" id="PF04055">
    <property type="entry name" value="Radical_SAM"/>
    <property type="match status" value="1"/>
</dbReference>
<dbReference type="Pfam" id="PF01938">
    <property type="entry name" value="TRAM"/>
    <property type="match status" value="1"/>
</dbReference>
<dbReference type="Pfam" id="PF00919">
    <property type="entry name" value="UPF0004"/>
    <property type="match status" value="1"/>
</dbReference>
<dbReference type="SFLD" id="SFLDF00273">
    <property type="entry name" value="(dimethylallyl)adenosine_tRNA"/>
    <property type="match status" value="1"/>
</dbReference>
<dbReference type="SFLD" id="SFLDG01082">
    <property type="entry name" value="B12-binding_domain_containing"/>
    <property type="match status" value="1"/>
</dbReference>
<dbReference type="SFLD" id="SFLDS00029">
    <property type="entry name" value="Radical_SAM"/>
    <property type="match status" value="1"/>
</dbReference>
<dbReference type="SMART" id="SM00729">
    <property type="entry name" value="Elp3"/>
    <property type="match status" value="1"/>
</dbReference>
<dbReference type="SUPFAM" id="SSF102114">
    <property type="entry name" value="Radical SAM enzymes"/>
    <property type="match status" value="1"/>
</dbReference>
<dbReference type="PROSITE" id="PS51449">
    <property type="entry name" value="MTTASE_N"/>
    <property type="match status" value="1"/>
</dbReference>
<dbReference type="PROSITE" id="PS01278">
    <property type="entry name" value="MTTASE_RADICAL"/>
    <property type="match status" value="1"/>
</dbReference>
<dbReference type="PROSITE" id="PS51918">
    <property type="entry name" value="RADICAL_SAM"/>
    <property type="match status" value="1"/>
</dbReference>
<dbReference type="PROSITE" id="PS50926">
    <property type="entry name" value="TRAM"/>
    <property type="match status" value="1"/>
</dbReference>
<name>MIAB_RHILO</name>
<comment type="function">
    <text evidence="1">Catalyzes the methylthiolation of N6-(dimethylallyl)adenosine (i(6)A), leading to the formation of 2-methylthio-N6-(dimethylallyl)adenosine (ms(2)i(6)A) at position 37 in tRNAs that read codons beginning with uridine.</text>
</comment>
<comment type="catalytic activity">
    <reaction evidence="1">
        <text>N(6)-dimethylallyladenosine(37) in tRNA + (sulfur carrier)-SH + AH2 + 2 S-adenosyl-L-methionine = 2-methylsulfanyl-N(6)-dimethylallyladenosine(37) in tRNA + (sulfur carrier)-H + 5'-deoxyadenosine + L-methionine + A + S-adenosyl-L-homocysteine + 2 H(+)</text>
        <dbReference type="Rhea" id="RHEA:37067"/>
        <dbReference type="Rhea" id="RHEA-COMP:10375"/>
        <dbReference type="Rhea" id="RHEA-COMP:10376"/>
        <dbReference type="Rhea" id="RHEA-COMP:14737"/>
        <dbReference type="Rhea" id="RHEA-COMP:14739"/>
        <dbReference type="ChEBI" id="CHEBI:13193"/>
        <dbReference type="ChEBI" id="CHEBI:15378"/>
        <dbReference type="ChEBI" id="CHEBI:17319"/>
        <dbReference type="ChEBI" id="CHEBI:17499"/>
        <dbReference type="ChEBI" id="CHEBI:29917"/>
        <dbReference type="ChEBI" id="CHEBI:57844"/>
        <dbReference type="ChEBI" id="CHEBI:57856"/>
        <dbReference type="ChEBI" id="CHEBI:59789"/>
        <dbReference type="ChEBI" id="CHEBI:64428"/>
        <dbReference type="ChEBI" id="CHEBI:74415"/>
        <dbReference type="ChEBI" id="CHEBI:74417"/>
        <dbReference type="EC" id="2.8.4.3"/>
    </reaction>
</comment>
<comment type="cofactor">
    <cofactor evidence="1">
        <name>[4Fe-4S] cluster</name>
        <dbReference type="ChEBI" id="CHEBI:49883"/>
    </cofactor>
    <text evidence="1">Binds 2 [4Fe-4S] clusters. One cluster is coordinated with 3 cysteines and an exchangeable S-adenosyl-L-methionine.</text>
</comment>
<comment type="subunit">
    <text evidence="1">Monomer.</text>
</comment>
<comment type="subcellular location">
    <subcellularLocation>
        <location evidence="1">Cytoplasm</location>
    </subcellularLocation>
</comment>
<comment type="similarity">
    <text evidence="1">Belongs to the methylthiotransferase family. MiaB subfamily.</text>
</comment>
<proteinExistence type="inferred from homology"/>
<accession>Q98BK3</accession>
<protein>
    <recommendedName>
        <fullName evidence="1">tRNA-2-methylthio-N(6)-dimethylallyladenosine synthase</fullName>
        <ecNumber evidence="1">2.8.4.3</ecNumber>
    </recommendedName>
    <alternativeName>
        <fullName evidence="1">(Dimethylallyl)adenosine tRNA methylthiotransferase MiaB</fullName>
    </alternativeName>
    <alternativeName>
        <fullName evidence="1">tRNA-i(6)A37 methylthiotransferase</fullName>
    </alternativeName>
</protein>
<evidence type="ECO:0000255" key="1">
    <source>
        <dbReference type="HAMAP-Rule" id="MF_01864"/>
    </source>
</evidence>
<evidence type="ECO:0000255" key="2">
    <source>
        <dbReference type="PROSITE-ProRule" id="PRU01266"/>
    </source>
</evidence>
<organism>
    <name type="scientific">Mesorhizobium japonicum (strain LMG 29417 / CECT 9101 / MAFF 303099)</name>
    <name type="common">Mesorhizobium loti (strain MAFF 303099)</name>
    <dbReference type="NCBI Taxonomy" id="266835"/>
    <lineage>
        <taxon>Bacteria</taxon>
        <taxon>Pseudomonadati</taxon>
        <taxon>Pseudomonadota</taxon>
        <taxon>Alphaproteobacteria</taxon>
        <taxon>Hyphomicrobiales</taxon>
        <taxon>Phyllobacteriaceae</taxon>
        <taxon>Mesorhizobium</taxon>
    </lineage>
</organism>
<feature type="chain" id="PRO_0000374485" description="tRNA-2-methylthio-N(6)-dimethylallyladenosine synthase">
    <location>
        <begin position="1"/>
        <end position="450"/>
    </location>
</feature>
<feature type="domain" description="MTTase N-terminal" evidence="1">
    <location>
        <begin position="7"/>
        <end position="127"/>
    </location>
</feature>
<feature type="domain" description="Radical SAM core" evidence="2">
    <location>
        <begin position="154"/>
        <end position="388"/>
    </location>
</feature>
<feature type="domain" description="TRAM" evidence="1">
    <location>
        <begin position="389"/>
        <end position="450"/>
    </location>
</feature>
<feature type="binding site" evidence="1">
    <location>
        <position position="16"/>
    </location>
    <ligand>
        <name>[4Fe-4S] cluster</name>
        <dbReference type="ChEBI" id="CHEBI:49883"/>
        <label>1</label>
    </ligand>
</feature>
<feature type="binding site" evidence="1">
    <location>
        <position position="52"/>
    </location>
    <ligand>
        <name>[4Fe-4S] cluster</name>
        <dbReference type="ChEBI" id="CHEBI:49883"/>
        <label>1</label>
    </ligand>
</feature>
<feature type="binding site" evidence="1">
    <location>
        <position position="90"/>
    </location>
    <ligand>
        <name>[4Fe-4S] cluster</name>
        <dbReference type="ChEBI" id="CHEBI:49883"/>
        <label>1</label>
    </ligand>
</feature>
<feature type="binding site" evidence="1">
    <location>
        <position position="168"/>
    </location>
    <ligand>
        <name>[4Fe-4S] cluster</name>
        <dbReference type="ChEBI" id="CHEBI:49883"/>
        <label>2</label>
        <note>4Fe-4S-S-AdoMet</note>
    </ligand>
</feature>
<feature type="binding site" evidence="1">
    <location>
        <position position="172"/>
    </location>
    <ligand>
        <name>[4Fe-4S] cluster</name>
        <dbReference type="ChEBI" id="CHEBI:49883"/>
        <label>2</label>
        <note>4Fe-4S-S-AdoMet</note>
    </ligand>
</feature>
<feature type="binding site" evidence="1">
    <location>
        <position position="175"/>
    </location>
    <ligand>
        <name>[4Fe-4S] cluster</name>
        <dbReference type="ChEBI" id="CHEBI:49883"/>
        <label>2</label>
        <note>4Fe-4S-S-AdoMet</note>
    </ligand>
</feature>
<gene>
    <name evidence="1" type="primary">miaB</name>
    <name type="ordered locus">mlr5534</name>
</gene>
<reference key="1">
    <citation type="journal article" date="2000" name="DNA Res.">
        <title>Complete genome structure of the nitrogen-fixing symbiotic bacterium Mesorhizobium loti.</title>
        <authorList>
            <person name="Kaneko T."/>
            <person name="Nakamura Y."/>
            <person name="Sato S."/>
            <person name="Asamizu E."/>
            <person name="Kato T."/>
            <person name="Sasamoto S."/>
            <person name="Watanabe A."/>
            <person name="Idesawa K."/>
            <person name="Ishikawa A."/>
            <person name="Kawashima K."/>
            <person name="Kimura T."/>
            <person name="Kishida Y."/>
            <person name="Kiyokawa C."/>
            <person name="Kohara M."/>
            <person name="Matsumoto M."/>
            <person name="Matsuno A."/>
            <person name="Mochizuki Y."/>
            <person name="Nakayama S."/>
            <person name="Nakazaki N."/>
            <person name="Shimpo S."/>
            <person name="Sugimoto M."/>
            <person name="Takeuchi C."/>
            <person name="Yamada M."/>
            <person name="Tabata S."/>
        </authorList>
    </citation>
    <scope>NUCLEOTIDE SEQUENCE [LARGE SCALE GENOMIC DNA]</scope>
    <source>
        <strain>LMG 29417 / CECT 9101 / MAFF 303099</strain>
    </source>
</reference>